<organism>
    <name type="scientific">Yersinia pestis bv. Antiqua (strain Antiqua)</name>
    <dbReference type="NCBI Taxonomy" id="360102"/>
    <lineage>
        <taxon>Bacteria</taxon>
        <taxon>Pseudomonadati</taxon>
        <taxon>Pseudomonadota</taxon>
        <taxon>Gammaproteobacteria</taxon>
        <taxon>Enterobacterales</taxon>
        <taxon>Yersiniaceae</taxon>
        <taxon>Yersinia</taxon>
    </lineage>
</organism>
<name>PURR_YERPA</name>
<comment type="function">
    <text evidence="1">Is the main repressor of the genes involved in the de novo synthesis of purine nucleotides, regulating purB, purC, purEK, purF, purHD, purL, purMN and guaBA expression. PurR is allosterically activated to bind its cognate DNA by binding the purine corepressors, hypoxanthine or guanine, thereby effecting transcription repression.</text>
</comment>
<comment type="pathway">
    <text>Purine metabolism; purine nucleotide biosynthesis [regulation].</text>
</comment>
<comment type="subunit">
    <text evidence="1">Homodimer.</text>
</comment>
<comment type="domain">
    <text evidence="1">Consists of two structural and functional domains: an N-terminal DNA-binding domain, approximately the first 60 residues, and a larger C-terminal domain, approximately 280 residues, which imparts the function of corepressor binding and oligomerization.</text>
</comment>
<evidence type="ECO:0000255" key="1">
    <source>
        <dbReference type="HAMAP-Rule" id="MF_01277"/>
    </source>
</evidence>
<accession>Q1C774</accession>
<dbReference type="EMBL" id="CP000308">
    <property type="protein sequence ID" value="ABG13698.1"/>
    <property type="molecule type" value="Genomic_DNA"/>
</dbReference>
<dbReference type="RefSeq" id="WP_002220297.1">
    <property type="nucleotide sequence ID" value="NC_008150.1"/>
</dbReference>
<dbReference type="SMR" id="Q1C774"/>
<dbReference type="KEGG" id="ypa:YPA_1732"/>
<dbReference type="UniPathway" id="UPA00488"/>
<dbReference type="Proteomes" id="UP000001971">
    <property type="component" value="Chromosome"/>
</dbReference>
<dbReference type="GO" id="GO:0003700">
    <property type="term" value="F:DNA-binding transcription factor activity"/>
    <property type="evidence" value="ECO:0007669"/>
    <property type="project" value="TreeGrafter"/>
</dbReference>
<dbReference type="GO" id="GO:0000976">
    <property type="term" value="F:transcription cis-regulatory region binding"/>
    <property type="evidence" value="ECO:0007669"/>
    <property type="project" value="TreeGrafter"/>
</dbReference>
<dbReference type="GO" id="GO:0045892">
    <property type="term" value="P:negative regulation of DNA-templated transcription"/>
    <property type="evidence" value="ECO:0007669"/>
    <property type="project" value="UniProtKB-UniRule"/>
</dbReference>
<dbReference type="GO" id="GO:0006164">
    <property type="term" value="P:purine nucleotide biosynthetic process"/>
    <property type="evidence" value="ECO:0007669"/>
    <property type="project" value="UniProtKB-UniPathway"/>
</dbReference>
<dbReference type="CDD" id="cd01392">
    <property type="entry name" value="HTH_LacI"/>
    <property type="match status" value="1"/>
</dbReference>
<dbReference type="CDD" id="cd06275">
    <property type="entry name" value="PBP1_PurR"/>
    <property type="match status" value="1"/>
</dbReference>
<dbReference type="FunFam" id="1.10.260.40:FF:000002">
    <property type="entry name" value="HTH-type transcriptional repressor PurR"/>
    <property type="match status" value="1"/>
</dbReference>
<dbReference type="FunFam" id="3.40.50.2300:FF:000045">
    <property type="entry name" value="HTH-type transcriptional repressor PurR"/>
    <property type="match status" value="1"/>
</dbReference>
<dbReference type="Gene3D" id="3.40.50.2300">
    <property type="match status" value="2"/>
</dbReference>
<dbReference type="Gene3D" id="1.10.260.40">
    <property type="entry name" value="lambda repressor-like DNA-binding domains"/>
    <property type="match status" value="1"/>
</dbReference>
<dbReference type="HAMAP" id="MF_01277">
    <property type="entry name" value="HTH_type_PurR"/>
    <property type="match status" value="1"/>
</dbReference>
<dbReference type="InterPro" id="IPR000843">
    <property type="entry name" value="HTH_LacI"/>
</dbReference>
<dbReference type="InterPro" id="IPR046335">
    <property type="entry name" value="LacI/GalR-like_sensor"/>
</dbReference>
<dbReference type="InterPro" id="IPR010982">
    <property type="entry name" value="Lambda_DNA-bd_dom_sf"/>
</dbReference>
<dbReference type="InterPro" id="IPR028082">
    <property type="entry name" value="Peripla_BP_I"/>
</dbReference>
<dbReference type="InterPro" id="IPR023588">
    <property type="entry name" value="Tscrpt_reg_HTH_PurR"/>
</dbReference>
<dbReference type="NCBIfam" id="NF007979">
    <property type="entry name" value="PRK10703.1"/>
    <property type="match status" value="1"/>
</dbReference>
<dbReference type="PANTHER" id="PTHR30146:SF148">
    <property type="entry name" value="HTH-TYPE TRANSCRIPTIONAL REPRESSOR PURR-RELATED"/>
    <property type="match status" value="1"/>
</dbReference>
<dbReference type="PANTHER" id="PTHR30146">
    <property type="entry name" value="LACI-RELATED TRANSCRIPTIONAL REPRESSOR"/>
    <property type="match status" value="1"/>
</dbReference>
<dbReference type="Pfam" id="PF00356">
    <property type="entry name" value="LacI"/>
    <property type="match status" value="1"/>
</dbReference>
<dbReference type="Pfam" id="PF13377">
    <property type="entry name" value="Peripla_BP_3"/>
    <property type="match status" value="1"/>
</dbReference>
<dbReference type="PRINTS" id="PR00036">
    <property type="entry name" value="HTHLACI"/>
</dbReference>
<dbReference type="SMART" id="SM00354">
    <property type="entry name" value="HTH_LACI"/>
    <property type="match status" value="1"/>
</dbReference>
<dbReference type="SUPFAM" id="SSF47413">
    <property type="entry name" value="lambda repressor-like DNA-binding domains"/>
    <property type="match status" value="1"/>
</dbReference>
<dbReference type="SUPFAM" id="SSF53822">
    <property type="entry name" value="Periplasmic binding protein-like I"/>
    <property type="match status" value="1"/>
</dbReference>
<dbReference type="PROSITE" id="PS00356">
    <property type="entry name" value="HTH_LACI_1"/>
    <property type="match status" value="1"/>
</dbReference>
<dbReference type="PROSITE" id="PS50932">
    <property type="entry name" value="HTH_LACI_2"/>
    <property type="match status" value="1"/>
</dbReference>
<protein>
    <recommendedName>
        <fullName evidence="1">HTH-type transcriptional repressor PurR</fullName>
    </recommendedName>
    <alternativeName>
        <fullName evidence="1">Pur regulon repressor</fullName>
    </alternativeName>
    <alternativeName>
        <fullName evidence="1">Purine nucleotide synthesis repressor</fullName>
    </alternativeName>
</protein>
<feature type="chain" id="PRO_0000279678" description="HTH-type transcriptional repressor PurR">
    <location>
        <begin position="1"/>
        <end position="341"/>
    </location>
</feature>
<feature type="domain" description="HTH lacI-type" evidence="1">
    <location>
        <begin position="2"/>
        <end position="56"/>
    </location>
</feature>
<feature type="DNA-binding region" description="H-T-H motif" evidence="1">
    <location>
        <begin position="4"/>
        <end position="23"/>
    </location>
</feature>
<feature type="DNA-binding region" evidence="1">
    <location>
        <begin position="48"/>
        <end position="56"/>
    </location>
</feature>
<feature type="binding site" evidence="1">
    <location>
        <position position="73"/>
    </location>
    <ligand>
        <name>hypoxanthine</name>
        <dbReference type="ChEBI" id="CHEBI:17368"/>
    </ligand>
</feature>
<feature type="binding site" evidence="1">
    <location>
        <position position="190"/>
    </location>
    <ligand>
        <name>hypoxanthine</name>
        <dbReference type="ChEBI" id="CHEBI:17368"/>
    </ligand>
</feature>
<feature type="binding site" evidence="1">
    <location>
        <position position="192"/>
    </location>
    <ligand>
        <name>hypoxanthine</name>
        <dbReference type="ChEBI" id="CHEBI:17368"/>
    </ligand>
</feature>
<feature type="binding site" evidence="1">
    <location>
        <position position="275"/>
    </location>
    <ligand>
        <name>hypoxanthine</name>
        <dbReference type="ChEBI" id="CHEBI:17368"/>
    </ligand>
</feature>
<proteinExistence type="inferred from homology"/>
<reference key="1">
    <citation type="journal article" date="2006" name="J. Bacteriol.">
        <title>Complete genome sequence of Yersinia pestis strains Antiqua and Nepal516: evidence of gene reduction in an emerging pathogen.</title>
        <authorList>
            <person name="Chain P.S.G."/>
            <person name="Hu P."/>
            <person name="Malfatti S.A."/>
            <person name="Radnedge L."/>
            <person name="Larimer F."/>
            <person name="Vergez L.M."/>
            <person name="Worsham P."/>
            <person name="Chu M.C."/>
            <person name="Andersen G.L."/>
        </authorList>
    </citation>
    <scope>NUCLEOTIDE SEQUENCE [LARGE SCALE GENOMIC DNA]</scope>
    <source>
        <strain>Antiqua</strain>
    </source>
</reference>
<gene>
    <name evidence="1" type="primary">purR</name>
    <name type="ordered locus">YPA_1732</name>
</gene>
<keyword id="KW-0238">DNA-binding</keyword>
<keyword id="KW-0658">Purine biosynthesis</keyword>
<keyword id="KW-0678">Repressor</keyword>
<keyword id="KW-0804">Transcription</keyword>
<keyword id="KW-0805">Transcription regulation</keyword>
<sequence length="341" mass="37779">MATIKDVAKHAGVSTTTVSHVINKTRFVAENTKAAVWAAIKELHYSPSAVARSLKVNHTKSIGLLATSSEAPYFAEVIEAVENSCYSKGYTLILCNSHNNLDKQKAYLAMLAQKRVDGLLVMCSEYPDQLLGMLEDYRNIPMVVMDWGTARGDFTDSIIDNAFEGGYLAGRYLIERGHRDIGAIPGQLARNTGGGRHQGFLKALEEANIPVREEWIVQGDSEPESGYKAMHQILTQKHRPTAVFCGGDIMAMGAICAADELGLRVPQDISVIGYDNVRNARYFSPALTTIHQPKERLGETAFAMLLDRIVSKREDPQTIEVHPKLVERRSVADGPFRDYRR</sequence>